<accession>Q9RVA9</accession>
<name>BUK_DEIRA</name>
<evidence type="ECO:0000255" key="1">
    <source>
        <dbReference type="HAMAP-Rule" id="MF_00542"/>
    </source>
</evidence>
<evidence type="ECO:0000305" key="2"/>
<dbReference type="EC" id="2.7.2.7" evidence="1"/>
<dbReference type="EMBL" id="AE000513">
    <property type="protein sequence ID" value="AAF10694.1"/>
    <property type="status" value="ALT_INIT"/>
    <property type="molecule type" value="Genomic_DNA"/>
</dbReference>
<dbReference type="PIR" id="G75433">
    <property type="entry name" value="G75433"/>
</dbReference>
<dbReference type="RefSeq" id="NP_294844.1">
    <property type="nucleotide sequence ID" value="NC_001263.1"/>
</dbReference>
<dbReference type="SMR" id="Q9RVA9"/>
<dbReference type="FunCoup" id="Q9RVA9">
    <property type="interactions" value="16"/>
</dbReference>
<dbReference type="STRING" id="243230.DR_1120"/>
<dbReference type="PaxDb" id="243230-DR_1120"/>
<dbReference type="EnsemblBacteria" id="AAF10694">
    <property type="protein sequence ID" value="AAF10694"/>
    <property type="gene ID" value="DR_1120"/>
</dbReference>
<dbReference type="KEGG" id="dra:DR_1120"/>
<dbReference type="PATRIC" id="fig|243230.17.peg.1316"/>
<dbReference type="eggNOG" id="COG3426">
    <property type="taxonomic scope" value="Bacteria"/>
</dbReference>
<dbReference type="HOGENOM" id="CLU_048716_0_0_0"/>
<dbReference type="InParanoid" id="Q9RVA9"/>
<dbReference type="OrthoDB" id="9771859at2"/>
<dbReference type="Proteomes" id="UP000002524">
    <property type="component" value="Chromosome 1"/>
</dbReference>
<dbReference type="GO" id="GO:0005737">
    <property type="term" value="C:cytoplasm"/>
    <property type="evidence" value="ECO:0007669"/>
    <property type="project" value="UniProtKB-SubCell"/>
</dbReference>
<dbReference type="GO" id="GO:0008776">
    <property type="term" value="F:acetate kinase activity"/>
    <property type="evidence" value="ECO:0000318"/>
    <property type="project" value="GO_Central"/>
</dbReference>
<dbReference type="GO" id="GO:0005524">
    <property type="term" value="F:ATP binding"/>
    <property type="evidence" value="ECO:0007669"/>
    <property type="project" value="UniProtKB-KW"/>
</dbReference>
<dbReference type="GO" id="GO:0047761">
    <property type="term" value="F:butyrate kinase activity"/>
    <property type="evidence" value="ECO:0007669"/>
    <property type="project" value="UniProtKB-UniRule"/>
</dbReference>
<dbReference type="GO" id="GO:0006083">
    <property type="term" value="P:acetate metabolic process"/>
    <property type="evidence" value="ECO:0000318"/>
    <property type="project" value="GO_Central"/>
</dbReference>
<dbReference type="CDD" id="cd24011">
    <property type="entry name" value="ASKHA_NBD_BK"/>
    <property type="match status" value="1"/>
</dbReference>
<dbReference type="Gene3D" id="3.30.420.40">
    <property type="match status" value="2"/>
</dbReference>
<dbReference type="HAMAP" id="MF_00542">
    <property type="entry name" value="Butyrate_kinase"/>
    <property type="match status" value="1"/>
</dbReference>
<dbReference type="InterPro" id="IPR000890">
    <property type="entry name" value="Aliphatic_acid_kin_short-chain"/>
</dbReference>
<dbReference type="InterPro" id="IPR023865">
    <property type="entry name" value="Aliphatic_acid_kinase_CS"/>
</dbReference>
<dbReference type="InterPro" id="IPR043129">
    <property type="entry name" value="ATPase_NBD"/>
</dbReference>
<dbReference type="InterPro" id="IPR011245">
    <property type="entry name" value="Butyrate_kin"/>
</dbReference>
<dbReference type="NCBIfam" id="NF002834">
    <property type="entry name" value="PRK03011.1-5"/>
    <property type="match status" value="1"/>
</dbReference>
<dbReference type="PANTHER" id="PTHR21060">
    <property type="entry name" value="ACETATE KINASE"/>
    <property type="match status" value="1"/>
</dbReference>
<dbReference type="PANTHER" id="PTHR21060:SF20">
    <property type="entry name" value="BUTYRATE KINASE 1-RELATED"/>
    <property type="match status" value="1"/>
</dbReference>
<dbReference type="Pfam" id="PF00871">
    <property type="entry name" value="Acetate_kinase"/>
    <property type="match status" value="1"/>
</dbReference>
<dbReference type="PIRSF" id="PIRSF036458">
    <property type="entry name" value="Butyrate_kin"/>
    <property type="match status" value="1"/>
</dbReference>
<dbReference type="PRINTS" id="PR00471">
    <property type="entry name" value="ACETATEKNASE"/>
</dbReference>
<dbReference type="SUPFAM" id="SSF53067">
    <property type="entry name" value="Actin-like ATPase domain"/>
    <property type="match status" value="2"/>
</dbReference>
<dbReference type="PROSITE" id="PS01076">
    <property type="entry name" value="ACETATE_KINASE_2"/>
    <property type="match status" value="1"/>
</dbReference>
<keyword id="KW-0067">ATP-binding</keyword>
<keyword id="KW-0963">Cytoplasm</keyword>
<keyword id="KW-0418">Kinase</keyword>
<keyword id="KW-0547">Nucleotide-binding</keyword>
<keyword id="KW-1185">Reference proteome</keyword>
<keyword id="KW-0808">Transferase</keyword>
<proteinExistence type="inferred from homology"/>
<feature type="chain" id="PRO_0000107668" description="Probable butyrate kinase">
    <location>
        <begin position="1"/>
        <end position="383"/>
    </location>
</feature>
<protein>
    <recommendedName>
        <fullName evidence="1">Probable butyrate kinase</fullName>
        <shortName evidence="1">BK</shortName>
        <ecNumber evidence="1">2.7.2.7</ecNumber>
    </recommendedName>
    <alternativeName>
        <fullName evidence="1">Branched-chain carboxylic acid kinase</fullName>
    </alternativeName>
</protein>
<comment type="catalytic activity">
    <reaction evidence="1">
        <text>butanoate + ATP = butanoyl phosphate + ADP</text>
        <dbReference type="Rhea" id="RHEA:13585"/>
        <dbReference type="ChEBI" id="CHEBI:17968"/>
        <dbReference type="ChEBI" id="CHEBI:30616"/>
        <dbReference type="ChEBI" id="CHEBI:58079"/>
        <dbReference type="ChEBI" id="CHEBI:456216"/>
        <dbReference type="EC" id="2.7.2.7"/>
    </reaction>
</comment>
<comment type="subcellular location">
    <subcellularLocation>
        <location evidence="1">Cytoplasm</location>
    </subcellularLocation>
</comment>
<comment type="similarity">
    <text evidence="1">Belongs to the acetokinase family.</text>
</comment>
<comment type="sequence caution" evidence="2">
    <conflict type="erroneous initiation">
        <sequence resource="EMBL-CDS" id="AAF10694"/>
    </conflict>
</comment>
<organism>
    <name type="scientific">Deinococcus radiodurans (strain ATCC 13939 / DSM 20539 / JCM 16871 / CCUG 27074 / LMG 4051 / NBRC 15346 / NCIMB 9279 / VKM B-1422 / R1)</name>
    <dbReference type="NCBI Taxonomy" id="243230"/>
    <lineage>
        <taxon>Bacteria</taxon>
        <taxon>Thermotogati</taxon>
        <taxon>Deinococcota</taxon>
        <taxon>Deinococci</taxon>
        <taxon>Deinococcales</taxon>
        <taxon>Deinococcaceae</taxon>
        <taxon>Deinococcus</taxon>
    </lineage>
</organism>
<sequence>MSMIAHVINPGISGVKLACAVIEPGQNPAFPSHLQVSLTREELPLEAAPDELGLDALAERILEQTAAWPAPDAVVGRGGLMGRVPAGTYHVTPELARYVLENVSGSQPADDPNPGIGAPLALRVAQARGVPAYIVDPQSVDELLPEAHMTGVPGVRREARFHALNARAVARRAAYEVGKQFREARVVVAHLGVTTSVTAFDQGRAIDTTGTAPDGGPMGARQSGPLPTRAVIRLLQTQSESELLRLLTRGSGFFALTGTADLSEIERRQEQGEDSVVQTAIAAFVHQVCKAIGEQTAALPGRPDAVALTGGIARWDAVVDRIERRLAWVAPFIVLPGELELEALAEGAGRVLLGLEGVREWTPEGVTLRPAAPLVQVETVEEV</sequence>
<reference key="1">
    <citation type="journal article" date="1999" name="Science">
        <title>Genome sequence of the radioresistant bacterium Deinococcus radiodurans R1.</title>
        <authorList>
            <person name="White O."/>
            <person name="Eisen J.A."/>
            <person name="Heidelberg J.F."/>
            <person name="Hickey E.K."/>
            <person name="Peterson J.D."/>
            <person name="Dodson R.J."/>
            <person name="Haft D.H."/>
            <person name="Gwinn M.L."/>
            <person name="Nelson W.C."/>
            <person name="Richardson D.L."/>
            <person name="Moffat K.S."/>
            <person name="Qin H."/>
            <person name="Jiang L."/>
            <person name="Pamphile W."/>
            <person name="Crosby M."/>
            <person name="Shen M."/>
            <person name="Vamathevan J.J."/>
            <person name="Lam P."/>
            <person name="McDonald L.A."/>
            <person name="Utterback T.R."/>
            <person name="Zalewski C."/>
            <person name="Makarova K.S."/>
            <person name="Aravind L."/>
            <person name="Daly M.J."/>
            <person name="Minton K.W."/>
            <person name="Fleischmann R.D."/>
            <person name="Ketchum K.A."/>
            <person name="Nelson K.E."/>
            <person name="Salzberg S.L."/>
            <person name="Smith H.O."/>
            <person name="Venter J.C."/>
            <person name="Fraser C.M."/>
        </authorList>
    </citation>
    <scope>NUCLEOTIDE SEQUENCE [LARGE SCALE GENOMIC DNA]</scope>
    <source>
        <strain>ATCC 13939 / DSM 20539 / JCM 16871 / CCUG 27074 / LMG 4051 / NBRC 15346 / NCIMB 9279 / VKM B-1422 / R1</strain>
    </source>
</reference>
<gene>
    <name evidence="1" type="primary">buk</name>
    <name type="ordered locus">DR_1120</name>
</gene>